<evidence type="ECO:0000255" key="1">
    <source>
        <dbReference type="HAMAP-Rule" id="MF_00156"/>
    </source>
</evidence>
<sequence>MSKITVSTLNKMKAEKNKITALTAYDASFAKLFHDNGVEVILVGDSLGMVLQGGDDTLGVTNQDIAYHTRCVRAGSRELFVIADMPFMTYSSPNDTCKNAAELMRAGANMVKLEGGEWLFESIEALTQQGIPVCGHLGLTPQSVHVFGGFKVQGRAEEQALKIIADAKALEAAGAQLLVLECIPSALAKRVTDALTIPTIGIGAGNTTDGQILVMHDLVGISAGFIPKFSKNFLLETGNMPEAVKKYCTDVKSGAFPSAEHEFK</sequence>
<proteinExistence type="inferred from homology"/>
<gene>
    <name evidence="1" type="primary">panB</name>
    <name type="ordered locus">PSHAa0602</name>
</gene>
<comment type="function">
    <text evidence="1">Catalyzes the reversible reaction in which hydroxymethyl group from 5,10-methylenetetrahydrofolate is transferred onto alpha-ketoisovalerate to form ketopantoate.</text>
</comment>
<comment type="catalytic activity">
    <reaction evidence="1">
        <text>3-methyl-2-oxobutanoate + (6R)-5,10-methylene-5,6,7,8-tetrahydrofolate + H2O = 2-dehydropantoate + (6S)-5,6,7,8-tetrahydrofolate</text>
        <dbReference type="Rhea" id="RHEA:11824"/>
        <dbReference type="ChEBI" id="CHEBI:11561"/>
        <dbReference type="ChEBI" id="CHEBI:11851"/>
        <dbReference type="ChEBI" id="CHEBI:15377"/>
        <dbReference type="ChEBI" id="CHEBI:15636"/>
        <dbReference type="ChEBI" id="CHEBI:57453"/>
        <dbReference type="EC" id="2.1.2.11"/>
    </reaction>
</comment>
<comment type="cofactor">
    <cofactor evidence="1">
        <name>Mg(2+)</name>
        <dbReference type="ChEBI" id="CHEBI:18420"/>
    </cofactor>
    <text evidence="1">Binds 1 Mg(2+) ion per subunit.</text>
</comment>
<comment type="pathway">
    <text evidence="1">Cofactor biosynthesis; (R)-pantothenate biosynthesis; (R)-pantoate from 3-methyl-2-oxobutanoate: step 1/2.</text>
</comment>
<comment type="subunit">
    <text evidence="1">Homodecamer; pentamer of dimers.</text>
</comment>
<comment type="subcellular location">
    <subcellularLocation>
        <location evidence="1">Cytoplasm</location>
    </subcellularLocation>
</comment>
<comment type="similarity">
    <text evidence="1">Belongs to the PanB family.</text>
</comment>
<keyword id="KW-0963">Cytoplasm</keyword>
<keyword id="KW-0460">Magnesium</keyword>
<keyword id="KW-0479">Metal-binding</keyword>
<keyword id="KW-0566">Pantothenate biosynthesis</keyword>
<keyword id="KW-1185">Reference proteome</keyword>
<keyword id="KW-0808">Transferase</keyword>
<protein>
    <recommendedName>
        <fullName evidence="1">3-methyl-2-oxobutanoate hydroxymethyltransferase</fullName>
        <ecNumber evidence="1">2.1.2.11</ecNumber>
    </recommendedName>
    <alternativeName>
        <fullName evidence="1">Ketopantoate hydroxymethyltransferase</fullName>
        <shortName evidence="1">KPHMT</shortName>
    </alternativeName>
</protein>
<feature type="chain" id="PRO_0000297332" description="3-methyl-2-oxobutanoate hydroxymethyltransferase">
    <location>
        <begin position="1"/>
        <end position="264"/>
    </location>
</feature>
<feature type="active site" description="Proton acceptor" evidence="1">
    <location>
        <position position="181"/>
    </location>
</feature>
<feature type="binding site" evidence="1">
    <location>
        <begin position="45"/>
        <end position="46"/>
    </location>
    <ligand>
        <name>3-methyl-2-oxobutanoate</name>
        <dbReference type="ChEBI" id="CHEBI:11851"/>
    </ligand>
</feature>
<feature type="binding site" evidence="1">
    <location>
        <position position="45"/>
    </location>
    <ligand>
        <name>Mg(2+)</name>
        <dbReference type="ChEBI" id="CHEBI:18420"/>
    </ligand>
</feature>
<feature type="binding site" evidence="1">
    <location>
        <position position="84"/>
    </location>
    <ligand>
        <name>3-methyl-2-oxobutanoate</name>
        <dbReference type="ChEBI" id="CHEBI:11851"/>
    </ligand>
</feature>
<feature type="binding site" evidence="1">
    <location>
        <position position="84"/>
    </location>
    <ligand>
        <name>Mg(2+)</name>
        <dbReference type="ChEBI" id="CHEBI:18420"/>
    </ligand>
</feature>
<feature type="binding site" evidence="1">
    <location>
        <position position="112"/>
    </location>
    <ligand>
        <name>3-methyl-2-oxobutanoate</name>
        <dbReference type="ChEBI" id="CHEBI:11851"/>
    </ligand>
</feature>
<feature type="binding site" evidence="1">
    <location>
        <position position="114"/>
    </location>
    <ligand>
        <name>Mg(2+)</name>
        <dbReference type="ChEBI" id="CHEBI:18420"/>
    </ligand>
</feature>
<organism>
    <name type="scientific">Pseudoalteromonas translucida (strain TAC 125)</name>
    <dbReference type="NCBI Taxonomy" id="326442"/>
    <lineage>
        <taxon>Bacteria</taxon>
        <taxon>Pseudomonadati</taxon>
        <taxon>Pseudomonadota</taxon>
        <taxon>Gammaproteobacteria</taxon>
        <taxon>Alteromonadales</taxon>
        <taxon>Pseudoalteromonadaceae</taxon>
        <taxon>Pseudoalteromonas</taxon>
    </lineage>
</organism>
<reference key="1">
    <citation type="journal article" date="2005" name="Genome Res.">
        <title>Coping with cold: the genome of the versatile marine Antarctica bacterium Pseudoalteromonas haloplanktis TAC125.</title>
        <authorList>
            <person name="Medigue C."/>
            <person name="Krin E."/>
            <person name="Pascal G."/>
            <person name="Barbe V."/>
            <person name="Bernsel A."/>
            <person name="Bertin P.N."/>
            <person name="Cheung F."/>
            <person name="Cruveiller S."/>
            <person name="D'Amico S."/>
            <person name="Duilio A."/>
            <person name="Fang G."/>
            <person name="Feller G."/>
            <person name="Ho C."/>
            <person name="Mangenot S."/>
            <person name="Marino G."/>
            <person name="Nilsson J."/>
            <person name="Parrilli E."/>
            <person name="Rocha E.P.C."/>
            <person name="Rouy Z."/>
            <person name="Sekowska A."/>
            <person name="Tutino M.L."/>
            <person name="Vallenet D."/>
            <person name="von Heijne G."/>
            <person name="Danchin A."/>
        </authorList>
    </citation>
    <scope>NUCLEOTIDE SEQUENCE [LARGE SCALE GENOMIC DNA]</scope>
    <source>
        <strain>TAC 125</strain>
    </source>
</reference>
<accession>Q3ILK1</accession>
<name>PANB_PSET1</name>
<dbReference type="EC" id="2.1.2.11" evidence="1"/>
<dbReference type="EMBL" id="CR954246">
    <property type="protein sequence ID" value="CAI85688.1"/>
    <property type="molecule type" value="Genomic_DNA"/>
</dbReference>
<dbReference type="SMR" id="Q3ILK1"/>
<dbReference type="STRING" id="326442.PSHAa0602"/>
<dbReference type="KEGG" id="pha:PSHAa0602"/>
<dbReference type="PATRIC" id="fig|326442.8.peg.567"/>
<dbReference type="eggNOG" id="COG0413">
    <property type="taxonomic scope" value="Bacteria"/>
</dbReference>
<dbReference type="HOGENOM" id="CLU_036645_1_0_6"/>
<dbReference type="BioCyc" id="PHAL326442:PSHA_RS02955-MONOMER"/>
<dbReference type="UniPathway" id="UPA00028">
    <property type="reaction ID" value="UER00003"/>
</dbReference>
<dbReference type="Proteomes" id="UP000006843">
    <property type="component" value="Chromosome I"/>
</dbReference>
<dbReference type="GO" id="GO:0005737">
    <property type="term" value="C:cytoplasm"/>
    <property type="evidence" value="ECO:0007669"/>
    <property type="project" value="UniProtKB-SubCell"/>
</dbReference>
<dbReference type="GO" id="GO:0003864">
    <property type="term" value="F:3-methyl-2-oxobutanoate hydroxymethyltransferase activity"/>
    <property type="evidence" value="ECO:0007669"/>
    <property type="project" value="UniProtKB-UniRule"/>
</dbReference>
<dbReference type="GO" id="GO:0000287">
    <property type="term" value="F:magnesium ion binding"/>
    <property type="evidence" value="ECO:0007669"/>
    <property type="project" value="TreeGrafter"/>
</dbReference>
<dbReference type="GO" id="GO:0015940">
    <property type="term" value="P:pantothenate biosynthetic process"/>
    <property type="evidence" value="ECO:0007669"/>
    <property type="project" value="UniProtKB-UniRule"/>
</dbReference>
<dbReference type="CDD" id="cd06557">
    <property type="entry name" value="KPHMT-like"/>
    <property type="match status" value="1"/>
</dbReference>
<dbReference type="FunFam" id="3.20.20.60:FF:000003">
    <property type="entry name" value="3-methyl-2-oxobutanoate hydroxymethyltransferase"/>
    <property type="match status" value="1"/>
</dbReference>
<dbReference type="Gene3D" id="3.20.20.60">
    <property type="entry name" value="Phosphoenolpyruvate-binding domains"/>
    <property type="match status" value="1"/>
</dbReference>
<dbReference type="HAMAP" id="MF_00156">
    <property type="entry name" value="PanB"/>
    <property type="match status" value="1"/>
</dbReference>
<dbReference type="InterPro" id="IPR003700">
    <property type="entry name" value="Pantoate_hydroxy_MeTrfase"/>
</dbReference>
<dbReference type="InterPro" id="IPR015813">
    <property type="entry name" value="Pyrv/PenolPyrv_kinase-like_dom"/>
</dbReference>
<dbReference type="InterPro" id="IPR040442">
    <property type="entry name" value="Pyrv_kinase-like_dom_sf"/>
</dbReference>
<dbReference type="NCBIfam" id="TIGR00222">
    <property type="entry name" value="panB"/>
    <property type="match status" value="1"/>
</dbReference>
<dbReference type="NCBIfam" id="NF001452">
    <property type="entry name" value="PRK00311.1"/>
    <property type="match status" value="1"/>
</dbReference>
<dbReference type="PANTHER" id="PTHR20881">
    <property type="entry name" value="3-METHYL-2-OXOBUTANOATE HYDROXYMETHYLTRANSFERASE"/>
    <property type="match status" value="1"/>
</dbReference>
<dbReference type="PANTHER" id="PTHR20881:SF0">
    <property type="entry name" value="3-METHYL-2-OXOBUTANOATE HYDROXYMETHYLTRANSFERASE"/>
    <property type="match status" value="1"/>
</dbReference>
<dbReference type="Pfam" id="PF02548">
    <property type="entry name" value="Pantoate_transf"/>
    <property type="match status" value="1"/>
</dbReference>
<dbReference type="PIRSF" id="PIRSF000388">
    <property type="entry name" value="Pantoate_hydroxy_MeTrfase"/>
    <property type="match status" value="1"/>
</dbReference>
<dbReference type="SUPFAM" id="SSF51621">
    <property type="entry name" value="Phosphoenolpyruvate/pyruvate domain"/>
    <property type="match status" value="1"/>
</dbReference>